<protein>
    <recommendedName>
        <fullName>Arsenate reductase</fullName>
        <ecNumber evidence="1">1.20.4.1</ecNumber>
    </recommendedName>
</protein>
<organism>
    <name type="scientific">Neisseria meningitidis serogroup B (strain ATCC BAA-335 / MC58)</name>
    <dbReference type="NCBI Taxonomy" id="122586"/>
    <lineage>
        <taxon>Bacteria</taxon>
        <taxon>Pseudomonadati</taxon>
        <taxon>Pseudomonadota</taxon>
        <taxon>Betaproteobacteria</taxon>
        <taxon>Neisseriales</taxon>
        <taxon>Neisseriaceae</taxon>
        <taxon>Neisseria</taxon>
    </lineage>
</organism>
<gene>
    <name type="primary">arsC</name>
    <name type="ordered locus">NMB0005</name>
</gene>
<sequence>MPEIKIFHNPRCSKSRAALSLLEERGIAAEVVKYLDTPPDLSELKDIFNKLGLASARGMMRVKDDLYKELGLDNPNLDNDALLRAIADHPALLERPIVLANGKAAVGRPLENIEAVL</sequence>
<feature type="chain" id="PRO_0000162542" description="Arsenate reductase">
    <location>
        <begin position="1"/>
        <end position="117"/>
    </location>
</feature>
<feature type="active site" description="Nucleophile; cysteine thioarsenate intermediate" evidence="1 2">
    <location>
        <position position="12"/>
    </location>
</feature>
<feature type="site" description="Important for activity" evidence="1">
    <location>
        <position position="8"/>
    </location>
</feature>
<feature type="site" description="Important for activity" evidence="1">
    <location>
        <position position="61"/>
    </location>
</feature>
<feature type="site" description="Important for activity" evidence="1">
    <location>
        <position position="95"/>
    </location>
</feature>
<feature type="site" description="Important for activity" evidence="1">
    <location>
        <position position="108"/>
    </location>
</feature>
<reference key="1">
    <citation type="journal article" date="2000" name="Science">
        <title>Complete genome sequence of Neisseria meningitidis serogroup B strain MC58.</title>
        <authorList>
            <person name="Tettelin H."/>
            <person name="Saunders N.J."/>
            <person name="Heidelberg J.F."/>
            <person name="Jeffries A.C."/>
            <person name="Nelson K.E."/>
            <person name="Eisen J.A."/>
            <person name="Ketchum K.A."/>
            <person name="Hood D.W."/>
            <person name="Peden J.F."/>
            <person name="Dodson R.J."/>
            <person name="Nelson W.C."/>
            <person name="Gwinn M.L."/>
            <person name="DeBoy R.T."/>
            <person name="Peterson J.D."/>
            <person name="Hickey E.K."/>
            <person name="Haft D.H."/>
            <person name="Salzberg S.L."/>
            <person name="White O."/>
            <person name="Fleischmann R.D."/>
            <person name="Dougherty B.A."/>
            <person name="Mason T.M."/>
            <person name="Ciecko A."/>
            <person name="Parksey D.S."/>
            <person name="Blair E."/>
            <person name="Cittone H."/>
            <person name="Clark E.B."/>
            <person name="Cotton M.D."/>
            <person name="Utterback T.R."/>
            <person name="Khouri H.M."/>
            <person name="Qin H."/>
            <person name="Vamathevan J.J."/>
            <person name="Gill J."/>
            <person name="Scarlato V."/>
            <person name="Masignani V."/>
            <person name="Pizza M."/>
            <person name="Grandi G."/>
            <person name="Sun L."/>
            <person name="Smith H.O."/>
            <person name="Fraser C.M."/>
            <person name="Moxon E.R."/>
            <person name="Rappuoli R."/>
            <person name="Venter J.C."/>
        </authorList>
    </citation>
    <scope>NUCLEOTIDE SEQUENCE [LARGE SCALE GENOMIC DNA]</scope>
    <source>
        <strain>ATCC BAA-335 / MC58</strain>
    </source>
</reference>
<keyword id="KW-0059">Arsenical resistance</keyword>
<keyword id="KW-0560">Oxidoreductase</keyword>
<keyword id="KW-1185">Reference proteome</keyword>
<proteinExistence type="inferred from homology"/>
<accession>P63622</accession>
<accession>Q9JQU0</accession>
<evidence type="ECO:0000250" key="1">
    <source>
        <dbReference type="UniProtKB" id="P08692"/>
    </source>
</evidence>
<evidence type="ECO:0000255" key="2">
    <source>
        <dbReference type="PROSITE-ProRule" id="PRU01282"/>
    </source>
</evidence>
<evidence type="ECO:0000305" key="3"/>
<name>ARSC_NEIMB</name>
<dbReference type="EC" id="1.20.4.1" evidence="1"/>
<dbReference type="EMBL" id="AE002098">
    <property type="protein sequence ID" value="AAF40484.1"/>
    <property type="molecule type" value="Genomic_DNA"/>
</dbReference>
<dbReference type="PIR" id="C81247">
    <property type="entry name" value="C81247"/>
</dbReference>
<dbReference type="RefSeq" id="NP_273071.1">
    <property type="nucleotide sequence ID" value="NC_003112.2"/>
</dbReference>
<dbReference type="RefSeq" id="WP_002225750.1">
    <property type="nucleotide sequence ID" value="NC_003112.2"/>
</dbReference>
<dbReference type="SMR" id="P63622"/>
<dbReference type="FunCoup" id="P63622">
    <property type="interactions" value="100"/>
</dbReference>
<dbReference type="STRING" id="122586.NMB0005"/>
<dbReference type="PaxDb" id="122586-NMB0005"/>
<dbReference type="GeneID" id="93387097"/>
<dbReference type="KEGG" id="nme:NMB0005"/>
<dbReference type="PATRIC" id="fig|122586.8.peg.5"/>
<dbReference type="HOGENOM" id="CLU_116644_0_1_4"/>
<dbReference type="InParanoid" id="P63622"/>
<dbReference type="OrthoDB" id="9790554at2"/>
<dbReference type="Proteomes" id="UP000000425">
    <property type="component" value="Chromosome"/>
</dbReference>
<dbReference type="GO" id="GO:0008794">
    <property type="term" value="F:arsenate reductase (glutaredoxin) activity"/>
    <property type="evidence" value="ECO:0007669"/>
    <property type="project" value="UniProtKB-EC"/>
</dbReference>
<dbReference type="GO" id="GO:0046685">
    <property type="term" value="P:response to arsenic-containing substance"/>
    <property type="evidence" value="ECO:0007669"/>
    <property type="project" value="UniProtKB-KW"/>
</dbReference>
<dbReference type="CDD" id="cd03034">
    <property type="entry name" value="ArsC_ArsC"/>
    <property type="match status" value="1"/>
</dbReference>
<dbReference type="Gene3D" id="3.40.30.10">
    <property type="entry name" value="Glutaredoxin"/>
    <property type="match status" value="1"/>
</dbReference>
<dbReference type="InterPro" id="IPR006659">
    <property type="entry name" value="Arsenate_reductase"/>
</dbReference>
<dbReference type="InterPro" id="IPR006660">
    <property type="entry name" value="Arsenate_reductase-like"/>
</dbReference>
<dbReference type="InterPro" id="IPR036249">
    <property type="entry name" value="Thioredoxin-like_sf"/>
</dbReference>
<dbReference type="NCBIfam" id="TIGR00014">
    <property type="entry name" value="arsC"/>
    <property type="match status" value="1"/>
</dbReference>
<dbReference type="PANTHER" id="PTHR30041">
    <property type="entry name" value="ARSENATE REDUCTASE"/>
    <property type="match status" value="1"/>
</dbReference>
<dbReference type="PANTHER" id="PTHR30041:SF4">
    <property type="entry name" value="ARSENATE REDUCTASE"/>
    <property type="match status" value="1"/>
</dbReference>
<dbReference type="Pfam" id="PF03960">
    <property type="entry name" value="ArsC"/>
    <property type="match status" value="1"/>
</dbReference>
<dbReference type="SUPFAM" id="SSF52833">
    <property type="entry name" value="Thioredoxin-like"/>
    <property type="match status" value="1"/>
</dbReference>
<dbReference type="PROSITE" id="PS51353">
    <property type="entry name" value="ARSC"/>
    <property type="match status" value="1"/>
</dbReference>
<comment type="function">
    <text evidence="1">Involved in resistance to arsenate. Catalyzes the reduction of arsenate [As(V)] to arsenite [As(III)].</text>
</comment>
<comment type="catalytic activity">
    <reaction evidence="1">
        <text>[glutaredoxin]-dithiol + arsenate + glutathione + H(+) = glutathionyl-S-S-[glutaredoxin] + arsenite + H2O</text>
        <dbReference type="Rhea" id="RHEA:22016"/>
        <dbReference type="Rhea" id="RHEA-COMP:10729"/>
        <dbReference type="Rhea" id="RHEA-COMP:17668"/>
        <dbReference type="ChEBI" id="CHEBI:15377"/>
        <dbReference type="ChEBI" id="CHEBI:15378"/>
        <dbReference type="ChEBI" id="CHEBI:29242"/>
        <dbReference type="ChEBI" id="CHEBI:29950"/>
        <dbReference type="ChEBI" id="CHEBI:48597"/>
        <dbReference type="ChEBI" id="CHEBI:57925"/>
        <dbReference type="ChEBI" id="CHEBI:146199"/>
        <dbReference type="EC" id="1.20.4.1"/>
    </reaction>
</comment>
<comment type="similarity">
    <text evidence="3">Belongs to the ArsC family.</text>
</comment>